<keyword id="KW-0007">Acetylation</keyword>
<keyword id="KW-0963">Cytoplasm</keyword>
<keyword id="KW-0903">Direct protein sequencing</keyword>
<keyword id="KW-0446">Lipid-binding</keyword>
<keyword id="KW-1185">Reference proteome</keyword>
<keyword id="KW-0813">Transport</keyword>
<comment type="function">
    <text evidence="2 3">FABPs are thought to play a role in the intracellular transport of long-chain fatty acids and their acyl-CoA esters. Binds oleic and palmitic acids but not palmitoyl CoA.</text>
</comment>
<comment type="subunit">
    <text evidence="2 3">Monomer.</text>
</comment>
<comment type="subcellular location">
    <subcellularLocation>
        <location>Cytoplasm</location>
    </subcellularLocation>
</comment>
<comment type="domain">
    <text evidence="1">Forms a beta-barrel structure that accommodates hydrophobic ligands in its interior.</text>
</comment>
<comment type="similarity">
    <text evidence="4">Belongs to the calycin superfamily. Fatty-acid binding protein (FABP) family.</text>
</comment>
<name>FABP7_BOVIN</name>
<evidence type="ECO:0000250" key="1"/>
<evidence type="ECO:0000269" key="2">
    <source>
    </source>
</evidence>
<evidence type="ECO:0000269" key="3">
    <source>
    </source>
</evidence>
<evidence type="ECO:0000305" key="4"/>
<evidence type="ECO:0000305" key="5">
    <source>
    </source>
</evidence>
<dbReference type="EMBL" id="BC118369">
    <property type="protein sequence ID" value="AAI18370.1"/>
    <property type="molecule type" value="mRNA"/>
</dbReference>
<dbReference type="PIR" id="S06479">
    <property type="entry name" value="S06479"/>
</dbReference>
<dbReference type="RefSeq" id="NP_001071630.1">
    <property type="nucleotide sequence ID" value="NM_001078162.2"/>
</dbReference>
<dbReference type="SMR" id="Q09139"/>
<dbReference type="FunCoup" id="Q09139">
    <property type="interactions" value="411"/>
</dbReference>
<dbReference type="STRING" id="9913.ENSBTAP00000017593"/>
<dbReference type="iPTMnet" id="Q09139"/>
<dbReference type="PaxDb" id="9913-ENSBTAP00000017593"/>
<dbReference type="PeptideAtlas" id="Q09139"/>
<dbReference type="GeneID" id="777787"/>
<dbReference type="KEGG" id="bta:777787"/>
<dbReference type="CTD" id="2173"/>
<dbReference type="VEuPathDB" id="HostDB:ENSBTAG00000033803"/>
<dbReference type="eggNOG" id="KOG4015">
    <property type="taxonomic scope" value="Eukaryota"/>
</dbReference>
<dbReference type="HOGENOM" id="CLU_113772_0_0_1"/>
<dbReference type="InParanoid" id="Q09139"/>
<dbReference type="OMA" id="VAIRHYE"/>
<dbReference type="OrthoDB" id="354351at2759"/>
<dbReference type="TreeFam" id="TF316894"/>
<dbReference type="Reactome" id="R-BTA-163560">
    <property type="pathway name" value="Triglyceride catabolism"/>
</dbReference>
<dbReference type="Proteomes" id="UP000009136">
    <property type="component" value="Chromosome 9"/>
</dbReference>
<dbReference type="Bgee" id="ENSBTAG00000033803">
    <property type="expression patterns" value="Expressed in Ammon's horn and 101 other cell types or tissues"/>
</dbReference>
<dbReference type="GO" id="GO:0005829">
    <property type="term" value="C:cytosol"/>
    <property type="evidence" value="ECO:0000318"/>
    <property type="project" value="GO_Central"/>
</dbReference>
<dbReference type="GO" id="GO:0005634">
    <property type="term" value="C:nucleus"/>
    <property type="evidence" value="ECO:0000318"/>
    <property type="project" value="GO_Central"/>
</dbReference>
<dbReference type="GO" id="GO:0005504">
    <property type="term" value="F:fatty acid binding"/>
    <property type="evidence" value="ECO:0000314"/>
    <property type="project" value="UniProtKB"/>
</dbReference>
<dbReference type="GO" id="GO:0015908">
    <property type="term" value="P:fatty acid transport"/>
    <property type="evidence" value="ECO:0000318"/>
    <property type="project" value="GO_Central"/>
</dbReference>
<dbReference type="CDD" id="cd19470">
    <property type="entry name" value="FABP7"/>
    <property type="match status" value="1"/>
</dbReference>
<dbReference type="FunFam" id="2.40.128.20:FF:000001">
    <property type="entry name" value="Fatty acid-binding protein, adipocyte"/>
    <property type="match status" value="1"/>
</dbReference>
<dbReference type="Gene3D" id="2.40.128.20">
    <property type="match status" value="1"/>
</dbReference>
<dbReference type="InterPro" id="IPR012674">
    <property type="entry name" value="Calycin"/>
</dbReference>
<dbReference type="InterPro" id="IPR000463">
    <property type="entry name" value="Fatty_acid-bd"/>
</dbReference>
<dbReference type="InterPro" id="IPR031259">
    <property type="entry name" value="ILBP"/>
</dbReference>
<dbReference type="InterPro" id="IPR000566">
    <property type="entry name" value="Lipocln_cytosolic_FA-bd_dom"/>
</dbReference>
<dbReference type="PANTHER" id="PTHR11955">
    <property type="entry name" value="FATTY ACID BINDING PROTEIN"/>
    <property type="match status" value="1"/>
</dbReference>
<dbReference type="Pfam" id="PF00061">
    <property type="entry name" value="Lipocalin"/>
    <property type="match status" value="1"/>
</dbReference>
<dbReference type="PRINTS" id="PR00178">
    <property type="entry name" value="FATTYACIDBP"/>
</dbReference>
<dbReference type="SUPFAM" id="SSF50814">
    <property type="entry name" value="Lipocalins"/>
    <property type="match status" value="1"/>
</dbReference>
<dbReference type="PROSITE" id="PS00214">
    <property type="entry name" value="FABP"/>
    <property type="match status" value="1"/>
</dbReference>
<proteinExistence type="evidence at protein level"/>
<organism>
    <name type="scientific">Bos taurus</name>
    <name type="common">Bovine</name>
    <dbReference type="NCBI Taxonomy" id="9913"/>
    <lineage>
        <taxon>Eukaryota</taxon>
        <taxon>Metazoa</taxon>
        <taxon>Chordata</taxon>
        <taxon>Craniata</taxon>
        <taxon>Vertebrata</taxon>
        <taxon>Euteleostomi</taxon>
        <taxon>Mammalia</taxon>
        <taxon>Eutheria</taxon>
        <taxon>Laurasiatheria</taxon>
        <taxon>Artiodactyla</taxon>
        <taxon>Ruminantia</taxon>
        <taxon>Pecora</taxon>
        <taxon>Bovidae</taxon>
        <taxon>Bovinae</taxon>
        <taxon>Bos</taxon>
    </lineage>
</organism>
<reference key="1">
    <citation type="submission" date="2006-06" db="EMBL/GenBank/DDBJ databases">
        <authorList>
            <consortium name="NIH - Mammalian Gene Collection (MGC) project"/>
        </authorList>
    </citation>
    <scope>NUCLEOTIDE SEQUENCE [LARGE SCALE MRNA]</scope>
    <source>
        <strain>Hereford</strain>
        <tissue>Fetal pons</tissue>
    </source>
</reference>
<reference key="2">
    <citation type="journal article" date="1989" name="Eur. J. Biochem.">
        <title>Fatty-acid-binding protein from bovine brain. Amino acid sequence and some properties.</title>
        <authorList>
            <person name="Schoentgen F."/>
            <person name="Pignede G."/>
            <person name="Bonanno L.M."/>
            <person name="Jolles P."/>
        </authorList>
    </citation>
    <scope>PRELIMINARY PROTEIN SEQUENCE OF 2-132</scope>
    <scope>ACETYLATION AT VAL-2</scope>
    <scope>SUBUNIT</scope>
    <scope>FUNCTION</scope>
    <source>
        <tissue>Brain</tissue>
    </source>
</reference>
<reference key="3">
    <citation type="journal article" date="1990" name="Mol. Cell. Biochem.">
        <title>Amino acid sequence and some ligand binding properties of fatty acid-binding protein from bovine brain.</title>
        <authorList>
            <person name="Schoentgen F."/>
            <person name="Bonanno L.M."/>
            <person name="Pignede G."/>
            <person name="Jolles P."/>
        </authorList>
    </citation>
    <scope>PRELIMINARY PROTEIN SEQUENCE OF 2-132</scope>
    <scope>SUBUNIT</scope>
    <scope>FUNCTION</scope>
    <source>
        <tissue>Brain</tissue>
    </source>
</reference>
<gene>
    <name type="primary">FABP7</name>
</gene>
<feature type="initiator methionine" description="Removed">
    <location>
        <position position="1"/>
    </location>
</feature>
<feature type="chain" id="PRO_0000067372" description="Fatty acid-binding protein, brain">
    <location>
        <begin position="2"/>
        <end position="132"/>
    </location>
</feature>
<feature type="binding site" evidence="1">
    <location>
        <begin position="127"/>
        <end position="129"/>
    </location>
    <ligand>
        <name>a fatty acid</name>
        <dbReference type="ChEBI" id="CHEBI:28868"/>
    </ligand>
</feature>
<feature type="modified residue" description="N-acetylvaline" evidence="5">
    <location>
        <position position="2"/>
    </location>
</feature>
<protein>
    <recommendedName>
        <fullName>Fatty acid-binding protein, brain</fullName>
    </recommendedName>
    <alternativeName>
        <fullName>Brain-type fatty acid-binding protein</fullName>
        <shortName>B-FABP</shortName>
    </alternativeName>
    <alternativeName>
        <fullName>Fatty acid-binding protein 7</fullName>
    </alternativeName>
</protein>
<sequence>MVEAFCATWKLTESQNFDEYMKALGVGFATRQVGNVTKPTVIISQEGDRVVIRTQSTFKNTEISFHLGEEFDETTADDRNCKSVVSLDGDKLVHVQKWDGKETNFVREIKDGKMIMTLTFGDVVAVRHYEKA</sequence>
<accession>Q09139</accession>
<accession>Q17QG9</accession>